<reference key="1">
    <citation type="journal article" date="2008" name="Antimicrob. Agents Chemother.">
        <title>Mutated response regulator graR is responsible for phenotypic conversion of Staphylococcus aureus from heterogeneous vancomycin-intermediate resistance to vancomycin-intermediate resistance.</title>
        <authorList>
            <person name="Neoh H.-M."/>
            <person name="Cui L."/>
            <person name="Yuzawa H."/>
            <person name="Takeuchi F."/>
            <person name="Matsuo M."/>
            <person name="Hiramatsu K."/>
        </authorList>
    </citation>
    <scope>NUCLEOTIDE SEQUENCE [LARGE SCALE GENOMIC DNA]</scope>
    <source>
        <strain>Mu3 / ATCC 700698</strain>
    </source>
</reference>
<protein>
    <recommendedName>
        <fullName evidence="1">Elongation factor G</fullName>
        <shortName evidence="1">EF-G</shortName>
    </recommendedName>
</protein>
<proteinExistence type="inferred from homology"/>
<sequence length="693" mass="76612">MAREFSLEKTRNIGIMAHIDAGKTTTTERILYYTGRIHKIGETHEGASQMDWMEQEQDRGITITSAATTAAWEGHRVNIIDTPGHVDFTVEVERSLRVLDGAVTVLDAQSGVEPQTETVWRQATTYGVPRIVFVNKMDKLGANFEYSVSTLHDRLQANAAPIQLPIGAEDEFEAIIDLVEMKCFKYTNDLGTEIEEIEIPEDHLDRAEEARASLIEAVAETSDELMEKYLGDEEISVSELKEAIRQATTNVEFYPVLCGTAFKNKGVQLMLDAVIDYLPSPLDVKPIIGHRASNPEEEVIAKADDSAEFAALAFKVMTDPYVGKLTFFRVYSGTMTSGSYVKNSTKGKRERVGRLLQMHANSRQEIDTVYSGDIAAAVGLKDTGTGDTLCGEKNDIILESMEFPEPVIHLSVEPKSKADQDKMTQALVKLQEEDPTFHAHTDEETGQVIIGGMGELHLDILVDRMKKEFNVECNVGAPMVSYRETFKSSAQVQGKFSRQSGGRGQYGDVHIEFTPNETGAGFEFENAIVGGVVPREYIPSVEAGLKDAMENGVLAGYPLIDVKAKLYDGSYHDVDSSEMAFKIAASLALKEAAKKCDPVILEPMMKVTIEMPEEYMGDIMGDVTSRRGRVDGMEPRGNAQVVNAYVPLSEMFGYATSLRSNTQGRGTYTMYFDHYAEVPKSIAEDIIKKNKGE</sequence>
<name>EFG_STAA1</name>
<dbReference type="EMBL" id="AP009324">
    <property type="protein sequence ID" value="BAF77428.1"/>
    <property type="molecule type" value="Genomic_DNA"/>
</dbReference>
<dbReference type="RefSeq" id="WP_000090315.1">
    <property type="nucleotide sequence ID" value="NZ_CTYB01000013.1"/>
</dbReference>
<dbReference type="SMR" id="A7WYX4"/>
<dbReference type="KEGG" id="saw:SAHV_0545"/>
<dbReference type="HOGENOM" id="CLU_002794_4_1_9"/>
<dbReference type="GO" id="GO:0005737">
    <property type="term" value="C:cytoplasm"/>
    <property type="evidence" value="ECO:0007669"/>
    <property type="project" value="UniProtKB-SubCell"/>
</dbReference>
<dbReference type="GO" id="GO:0005525">
    <property type="term" value="F:GTP binding"/>
    <property type="evidence" value="ECO:0007669"/>
    <property type="project" value="UniProtKB-UniRule"/>
</dbReference>
<dbReference type="GO" id="GO:0003924">
    <property type="term" value="F:GTPase activity"/>
    <property type="evidence" value="ECO:0007669"/>
    <property type="project" value="InterPro"/>
</dbReference>
<dbReference type="GO" id="GO:0003746">
    <property type="term" value="F:translation elongation factor activity"/>
    <property type="evidence" value="ECO:0007669"/>
    <property type="project" value="UniProtKB-UniRule"/>
</dbReference>
<dbReference type="GO" id="GO:0032790">
    <property type="term" value="P:ribosome disassembly"/>
    <property type="evidence" value="ECO:0007669"/>
    <property type="project" value="TreeGrafter"/>
</dbReference>
<dbReference type="CDD" id="cd01886">
    <property type="entry name" value="EF-G"/>
    <property type="match status" value="1"/>
</dbReference>
<dbReference type="CDD" id="cd16262">
    <property type="entry name" value="EFG_III"/>
    <property type="match status" value="1"/>
</dbReference>
<dbReference type="CDD" id="cd01434">
    <property type="entry name" value="EFG_mtEFG1_IV"/>
    <property type="match status" value="1"/>
</dbReference>
<dbReference type="CDD" id="cd03713">
    <property type="entry name" value="EFG_mtEFG_C"/>
    <property type="match status" value="1"/>
</dbReference>
<dbReference type="CDD" id="cd04088">
    <property type="entry name" value="EFG_mtEFG_II"/>
    <property type="match status" value="1"/>
</dbReference>
<dbReference type="FunFam" id="2.40.30.10:FF:000006">
    <property type="entry name" value="Elongation factor G"/>
    <property type="match status" value="1"/>
</dbReference>
<dbReference type="FunFam" id="3.30.230.10:FF:000003">
    <property type="entry name" value="Elongation factor G"/>
    <property type="match status" value="1"/>
</dbReference>
<dbReference type="FunFam" id="3.30.70.240:FF:000001">
    <property type="entry name" value="Elongation factor G"/>
    <property type="match status" value="1"/>
</dbReference>
<dbReference type="FunFam" id="3.30.70.870:FF:000001">
    <property type="entry name" value="Elongation factor G"/>
    <property type="match status" value="1"/>
</dbReference>
<dbReference type="FunFam" id="3.40.50.300:FF:000029">
    <property type="entry name" value="Elongation factor G"/>
    <property type="match status" value="1"/>
</dbReference>
<dbReference type="Gene3D" id="3.30.230.10">
    <property type="match status" value="1"/>
</dbReference>
<dbReference type="Gene3D" id="3.30.70.240">
    <property type="match status" value="1"/>
</dbReference>
<dbReference type="Gene3D" id="3.30.70.870">
    <property type="entry name" value="Elongation Factor G (Translational Gtpase), domain 3"/>
    <property type="match status" value="1"/>
</dbReference>
<dbReference type="Gene3D" id="3.40.50.300">
    <property type="entry name" value="P-loop containing nucleotide triphosphate hydrolases"/>
    <property type="match status" value="1"/>
</dbReference>
<dbReference type="Gene3D" id="2.40.30.10">
    <property type="entry name" value="Translation factors"/>
    <property type="match status" value="1"/>
</dbReference>
<dbReference type="HAMAP" id="MF_00054_B">
    <property type="entry name" value="EF_G_EF_2_B"/>
    <property type="match status" value="1"/>
</dbReference>
<dbReference type="InterPro" id="IPR041095">
    <property type="entry name" value="EFG_II"/>
</dbReference>
<dbReference type="InterPro" id="IPR009022">
    <property type="entry name" value="EFG_III"/>
</dbReference>
<dbReference type="InterPro" id="IPR035647">
    <property type="entry name" value="EFG_III/V"/>
</dbReference>
<dbReference type="InterPro" id="IPR047872">
    <property type="entry name" value="EFG_IV"/>
</dbReference>
<dbReference type="InterPro" id="IPR035649">
    <property type="entry name" value="EFG_V"/>
</dbReference>
<dbReference type="InterPro" id="IPR000640">
    <property type="entry name" value="EFG_V-like"/>
</dbReference>
<dbReference type="InterPro" id="IPR004161">
    <property type="entry name" value="EFTu-like_2"/>
</dbReference>
<dbReference type="InterPro" id="IPR031157">
    <property type="entry name" value="G_TR_CS"/>
</dbReference>
<dbReference type="InterPro" id="IPR027417">
    <property type="entry name" value="P-loop_NTPase"/>
</dbReference>
<dbReference type="InterPro" id="IPR020568">
    <property type="entry name" value="Ribosomal_Su5_D2-typ_SF"/>
</dbReference>
<dbReference type="InterPro" id="IPR014721">
    <property type="entry name" value="Ribsml_uS5_D2-typ_fold_subgr"/>
</dbReference>
<dbReference type="InterPro" id="IPR005225">
    <property type="entry name" value="Small_GTP-bd"/>
</dbReference>
<dbReference type="InterPro" id="IPR000795">
    <property type="entry name" value="T_Tr_GTP-bd_dom"/>
</dbReference>
<dbReference type="InterPro" id="IPR009000">
    <property type="entry name" value="Transl_B-barrel_sf"/>
</dbReference>
<dbReference type="InterPro" id="IPR004540">
    <property type="entry name" value="Transl_elong_EFG/EF2"/>
</dbReference>
<dbReference type="InterPro" id="IPR005517">
    <property type="entry name" value="Transl_elong_EFG/EF2_IV"/>
</dbReference>
<dbReference type="NCBIfam" id="TIGR00484">
    <property type="entry name" value="EF-G"/>
    <property type="match status" value="1"/>
</dbReference>
<dbReference type="NCBIfam" id="NF009379">
    <property type="entry name" value="PRK12740.1-3"/>
    <property type="match status" value="1"/>
</dbReference>
<dbReference type="NCBIfam" id="NF009381">
    <property type="entry name" value="PRK12740.1-5"/>
    <property type="match status" value="1"/>
</dbReference>
<dbReference type="NCBIfam" id="TIGR00231">
    <property type="entry name" value="small_GTP"/>
    <property type="match status" value="1"/>
</dbReference>
<dbReference type="PANTHER" id="PTHR43261:SF1">
    <property type="entry name" value="RIBOSOME-RELEASING FACTOR 2, MITOCHONDRIAL"/>
    <property type="match status" value="1"/>
</dbReference>
<dbReference type="PANTHER" id="PTHR43261">
    <property type="entry name" value="TRANSLATION ELONGATION FACTOR G-RELATED"/>
    <property type="match status" value="1"/>
</dbReference>
<dbReference type="Pfam" id="PF00679">
    <property type="entry name" value="EFG_C"/>
    <property type="match status" value="1"/>
</dbReference>
<dbReference type="Pfam" id="PF14492">
    <property type="entry name" value="EFG_III"/>
    <property type="match status" value="1"/>
</dbReference>
<dbReference type="Pfam" id="PF03764">
    <property type="entry name" value="EFG_IV"/>
    <property type="match status" value="1"/>
</dbReference>
<dbReference type="Pfam" id="PF00009">
    <property type="entry name" value="GTP_EFTU"/>
    <property type="match status" value="1"/>
</dbReference>
<dbReference type="Pfam" id="PF03144">
    <property type="entry name" value="GTP_EFTU_D2"/>
    <property type="match status" value="1"/>
</dbReference>
<dbReference type="PRINTS" id="PR00315">
    <property type="entry name" value="ELONGATNFCT"/>
</dbReference>
<dbReference type="SMART" id="SM00838">
    <property type="entry name" value="EFG_C"/>
    <property type="match status" value="1"/>
</dbReference>
<dbReference type="SMART" id="SM00889">
    <property type="entry name" value="EFG_IV"/>
    <property type="match status" value="1"/>
</dbReference>
<dbReference type="SUPFAM" id="SSF54980">
    <property type="entry name" value="EF-G C-terminal domain-like"/>
    <property type="match status" value="2"/>
</dbReference>
<dbReference type="SUPFAM" id="SSF52540">
    <property type="entry name" value="P-loop containing nucleoside triphosphate hydrolases"/>
    <property type="match status" value="1"/>
</dbReference>
<dbReference type="SUPFAM" id="SSF54211">
    <property type="entry name" value="Ribosomal protein S5 domain 2-like"/>
    <property type="match status" value="1"/>
</dbReference>
<dbReference type="SUPFAM" id="SSF50447">
    <property type="entry name" value="Translation proteins"/>
    <property type="match status" value="1"/>
</dbReference>
<dbReference type="PROSITE" id="PS00301">
    <property type="entry name" value="G_TR_1"/>
    <property type="match status" value="1"/>
</dbReference>
<dbReference type="PROSITE" id="PS51722">
    <property type="entry name" value="G_TR_2"/>
    <property type="match status" value="1"/>
</dbReference>
<gene>
    <name evidence="1" type="primary">fusA</name>
    <name type="ordered locus">SAHV_0545</name>
</gene>
<organism>
    <name type="scientific">Staphylococcus aureus (strain Mu3 / ATCC 700698)</name>
    <dbReference type="NCBI Taxonomy" id="418127"/>
    <lineage>
        <taxon>Bacteria</taxon>
        <taxon>Bacillati</taxon>
        <taxon>Bacillota</taxon>
        <taxon>Bacilli</taxon>
        <taxon>Bacillales</taxon>
        <taxon>Staphylococcaceae</taxon>
        <taxon>Staphylococcus</taxon>
    </lineage>
</organism>
<comment type="function">
    <text evidence="1">Catalyzes the GTP-dependent ribosomal translocation step during translation elongation. During this step, the ribosome changes from the pre-translocational (PRE) to the post-translocational (POST) state as the newly formed A-site-bound peptidyl-tRNA and P-site-bound deacylated tRNA move to the P and E sites, respectively. Catalyzes the coordinated movement of the two tRNA molecules, the mRNA and conformational changes in the ribosome.</text>
</comment>
<comment type="subcellular location">
    <subcellularLocation>
        <location evidence="1">Cytoplasm</location>
    </subcellularLocation>
</comment>
<comment type="similarity">
    <text evidence="1">Belongs to the TRAFAC class translation factor GTPase superfamily. Classic translation factor GTPase family. EF-G/EF-2 subfamily.</text>
</comment>
<feature type="chain" id="PRO_1000008885" description="Elongation factor G">
    <location>
        <begin position="1"/>
        <end position="693"/>
    </location>
</feature>
<feature type="domain" description="tr-type G">
    <location>
        <begin position="8"/>
        <end position="282"/>
    </location>
</feature>
<feature type="binding site" evidence="1">
    <location>
        <begin position="17"/>
        <end position="24"/>
    </location>
    <ligand>
        <name>GTP</name>
        <dbReference type="ChEBI" id="CHEBI:37565"/>
    </ligand>
</feature>
<feature type="binding site" evidence="1">
    <location>
        <begin position="81"/>
        <end position="85"/>
    </location>
    <ligand>
        <name>GTP</name>
        <dbReference type="ChEBI" id="CHEBI:37565"/>
    </ligand>
</feature>
<feature type="binding site" evidence="1">
    <location>
        <begin position="135"/>
        <end position="138"/>
    </location>
    <ligand>
        <name>GTP</name>
        <dbReference type="ChEBI" id="CHEBI:37565"/>
    </ligand>
</feature>
<evidence type="ECO:0000255" key="1">
    <source>
        <dbReference type="HAMAP-Rule" id="MF_00054"/>
    </source>
</evidence>
<accession>A7WYX4</accession>
<keyword id="KW-0963">Cytoplasm</keyword>
<keyword id="KW-0251">Elongation factor</keyword>
<keyword id="KW-0342">GTP-binding</keyword>
<keyword id="KW-0547">Nucleotide-binding</keyword>
<keyword id="KW-0648">Protein biosynthesis</keyword>